<proteinExistence type="inferred from homology"/>
<accession>Q21W39</accession>
<dbReference type="EC" id="6.3.4.4" evidence="1"/>
<dbReference type="EMBL" id="CP000267">
    <property type="protein sequence ID" value="ABD70014.1"/>
    <property type="molecule type" value="Genomic_DNA"/>
</dbReference>
<dbReference type="RefSeq" id="WP_011464582.1">
    <property type="nucleotide sequence ID" value="NC_007908.1"/>
</dbReference>
<dbReference type="SMR" id="Q21W39"/>
<dbReference type="STRING" id="338969.Rfer_2296"/>
<dbReference type="KEGG" id="rfr:Rfer_2296"/>
<dbReference type="eggNOG" id="COG0104">
    <property type="taxonomic scope" value="Bacteria"/>
</dbReference>
<dbReference type="HOGENOM" id="CLU_029848_0_0_4"/>
<dbReference type="OrthoDB" id="9807553at2"/>
<dbReference type="UniPathway" id="UPA00075">
    <property type="reaction ID" value="UER00335"/>
</dbReference>
<dbReference type="Proteomes" id="UP000008332">
    <property type="component" value="Chromosome"/>
</dbReference>
<dbReference type="GO" id="GO:0005737">
    <property type="term" value="C:cytoplasm"/>
    <property type="evidence" value="ECO:0007669"/>
    <property type="project" value="UniProtKB-SubCell"/>
</dbReference>
<dbReference type="GO" id="GO:0004019">
    <property type="term" value="F:adenylosuccinate synthase activity"/>
    <property type="evidence" value="ECO:0007669"/>
    <property type="project" value="UniProtKB-UniRule"/>
</dbReference>
<dbReference type="GO" id="GO:0005525">
    <property type="term" value="F:GTP binding"/>
    <property type="evidence" value="ECO:0007669"/>
    <property type="project" value="UniProtKB-UniRule"/>
</dbReference>
<dbReference type="GO" id="GO:0000287">
    <property type="term" value="F:magnesium ion binding"/>
    <property type="evidence" value="ECO:0007669"/>
    <property type="project" value="UniProtKB-UniRule"/>
</dbReference>
<dbReference type="GO" id="GO:0044208">
    <property type="term" value="P:'de novo' AMP biosynthetic process"/>
    <property type="evidence" value="ECO:0007669"/>
    <property type="project" value="UniProtKB-UniRule"/>
</dbReference>
<dbReference type="GO" id="GO:0046040">
    <property type="term" value="P:IMP metabolic process"/>
    <property type="evidence" value="ECO:0007669"/>
    <property type="project" value="TreeGrafter"/>
</dbReference>
<dbReference type="CDD" id="cd03108">
    <property type="entry name" value="AdSS"/>
    <property type="match status" value="1"/>
</dbReference>
<dbReference type="FunFam" id="1.10.300.10:FF:000001">
    <property type="entry name" value="Adenylosuccinate synthetase"/>
    <property type="match status" value="1"/>
</dbReference>
<dbReference type="FunFam" id="3.90.170.10:FF:000001">
    <property type="entry name" value="Adenylosuccinate synthetase"/>
    <property type="match status" value="1"/>
</dbReference>
<dbReference type="Gene3D" id="3.40.440.10">
    <property type="entry name" value="Adenylosuccinate Synthetase, subunit A, domain 1"/>
    <property type="match status" value="1"/>
</dbReference>
<dbReference type="Gene3D" id="1.10.300.10">
    <property type="entry name" value="Adenylosuccinate Synthetase, subunit A, domain 2"/>
    <property type="match status" value="1"/>
</dbReference>
<dbReference type="Gene3D" id="3.90.170.10">
    <property type="entry name" value="Adenylosuccinate Synthetase, subunit A, domain 3"/>
    <property type="match status" value="1"/>
</dbReference>
<dbReference type="HAMAP" id="MF_00011">
    <property type="entry name" value="Adenylosucc_synth"/>
    <property type="match status" value="1"/>
</dbReference>
<dbReference type="InterPro" id="IPR018220">
    <property type="entry name" value="Adenylosuccin_syn_GTP-bd"/>
</dbReference>
<dbReference type="InterPro" id="IPR033128">
    <property type="entry name" value="Adenylosuccin_syn_Lys_AS"/>
</dbReference>
<dbReference type="InterPro" id="IPR042109">
    <property type="entry name" value="Adenylosuccinate_synth_dom1"/>
</dbReference>
<dbReference type="InterPro" id="IPR042110">
    <property type="entry name" value="Adenylosuccinate_synth_dom2"/>
</dbReference>
<dbReference type="InterPro" id="IPR042111">
    <property type="entry name" value="Adenylosuccinate_synth_dom3"/>
</dbReference>
<dbReference type="InterPro" id="IPR001114">
    <property type="entry name" value="Adenylosuccinate_synthetase"/>
</dbReference>
<dbReference type="InterPro" id="IPR027417">
    <property type="entry name" value="P-loop_NTPase"/>
</dbReference>
<dbReference type="NCBIfam" id="NF002223">
    <property type="entry name" value="PRK01117.1"/>
    <property type="match status" value="1"/>
</dbReference>
<dbReference type="NCBIfam" id="TIGR00184">
    <property type="entry name" value="purA"/>
    <property type="match status" value="1"/>
</dbReference>
<dbReference type="PANTHER" id="PTHR11846">
    <property type="entry name" value="ADENYLOSUCCINATE SYNTHETASE"/>
    <property type="match status" value="1"/>
</dbReference>
<dbReference type="PANTHER" id="PTHR11846:SF0">
    <property type="entry name" value="ADENYLOSUCCINATE SYNTHETASE"/>
    <property type="match status" value="1"/>
</dbReference>
<dbReference type="Pfam" id="PF00709">
    <property type="entry name" value="Adenylsucc_synt"/>
    <property type="match status" value="1"/>
</dbReference>
<dbReference type="SMART" id="SM00788">
    <property type="entry name" value="Adenylsucc_synt"/>
    <property type="match status" value="1"/>
</dbReference>
<dbReference type="SUPFAM" id="SSF52540">
    <property type="entry name" value="P-loop containing nucleoside triphosphate hydrolases"/>
    <property type="match status" value="1"/>
</dbReference>
<dbReference type="PROSITE" id="PS01266">
    <property type="entry name" value="ADENYLOSUCCIN_SYN_1"/>
    <property type="match status" value="1"/>
</dbReference>
<dbReference type="PROSITE" id="PS00513">
    <property type="entry name" value="ADENYLOSUCCIN_SYN_2"/>
    <property type="match status" value="1"/>
</dbReference>
<sequence length="458" mass="49482">MIATKGRNVVVVGTQWGDEGKGKLVDWLTESAQGVVRFQGGHNAGHTLVIHGVKTALHLVPSGIMRPGVKCYIGNGVVLSAAKLFEEIEALEKAGVELRSRLRISEACPLILPFHAALDVAREAAREQGGQAKIGTTGRGIGPAYEDKIARRALRVQDLKFPERFARKLHELLDLHNHVLTTYLGSVAFDFGPTLAPYMADGKVLFQPVFDEAMRHAQLLKPMMADVSRELNEAHLKGANLLFEGAQGTLLDVDHGTYPYVTSSNCVAGNAAAGSGVGPGMLHYVLGITKAYCTRVGGGPFPTELAWEVEGTPGYHMSTVGAEKGVTTGRSRRCGWFDAALLKRSAQVNGLTGLCITKLDVLDGLKELKLCTGYQLDGELTDILPMGADDIERCTPVYETISGWSDSTVGVTQFDKLPTNARLYLQRIEQITGVPIHMVSTGPDRAQTILMRHPYLAD</sequence>
<gene>
    <name evidence="1" type="primary">purA</name>
    <name type="ordered locus">Rfer_2296</name>
</gene>
<comment type="function">
    <text evidence="1">Plays an important role in the de novo pathway of purine nucleotide biosynthesis. Catalyzes the first committed step in the biosynthesis of AMP from IMP.</text>
</comment>
<comment type="catalytic activity">
    <reaction evidence="1">
        <text>IMP + L-aspartate + GTP = N(6)-(1,2-dicarboxyethyl)-AMP + GDP + phosphate + 2 H(+)</text>
        <dbReference type="Rhea" id="RHEA:15753"/>
        <dbReference type="ChEBI" id="CHEBI:15378"/>
        <dbReference type="ChEBI" id="CHEBI:29991"/>
        <dbReference type="ChEBI" id="CHEBI:37565"/>
        <dbReference type="ChEBI" id="CHEBI:43474"/>
        <dbReference type="ChEBI" id="CHEBI:57567"/>
        <dbReference type="ChEBI" id="CHEBI:58053"/>
        <dbReference type="ChEBI" id="CHEBI:58189"/>
        <dbReference type="EC" id="6.3.4.4"/>
    </reaction>
</comment>
<comment type="cofactor">
    <cofactor evidence="1">
        <name>Mg(2+)</name>
        <dbReference type="ChEBI" id="CHEBI:18420"/>
    </cofactor>
    <text evidence="1">Binds 1 Mg(2+) ion per subunit.</text>
</comment>
<comment type="pathway">
    <text evidence="1">Purine metabolism; AMP biosynthesis via de novo pathway; AMP from IMP: step 1/2.</text>
</comment>
<comment type="subunit">
    <text evidence="1">Homodimer.</text>
</comment>
<comment type="subcellular location">
    <subcellularLocation>
        <location evidence="1">Cytoplasm</location>
    </subcellularLocation>
</comment>
<comment type="similarity">
    <text evidence="1">Belongs to the adenylosuccinate synthetase family.</text>
</comment>
<name>PURA_ALBFT</name>
<feature type="chain" id="PRO_0000321807" description="Adenylosuccinate synthetase">
    <location>
        <begin position="1"/>
        <end position="458"/>
    </location>
</feature>
<feature type="active site" description="Proton acceptor" evidence="1">
    <location>
        <position position="18"/>
    </location>
</feature>
<feature type="active site" description="Proton donor" evidence="1">
    <location>
        <position position="46"/>
    </location>
</feature>
<feature type="binding site" evidence="1">
    <location>
        <begin position="17"/>
        <end position="23"/>
    </location>
    <ligand>
        <name>GTP</name>
        <dbReference type="ChEBI" id="CHEBI:37565"/>
    </ligand>
</feature>
<feature type="binding site" description="in other chain" evidence="1">
    <location>
        <begin position="18"/>
        <end position="21"/>
    </location>
    <ligand>
        <name>IMP</name>
        <dbReference type="ChEBI" id="CHEBI:58053"/>
        <note>ligand shared between dimeric partners</note>
    </ligand>
</feature>
<feature type="binding site" evidence="1">
    <location>
        <position position="18"/>
    </location>
    <ligand>
        <name>Mg(2+)</name>
        <dbReference type="ChEBI" id="CHEBI:18420"/>
    </ligand>
</feature>
<feature type="binding site" description="in other chain" evidence="1">
    <location>
        <begin position="43"/>
        <end position="46"/>
    </location>
    <ligand>
        <name>IMP</name>
        <dbReference type="ChEBI" id="CHEBI:58053"/>
        <note>ligand shared between dimeric partners</note>
    </ligand>
</feature>
<feature type="binding site" evidence="1">
    <location>
        <begin position="45"/>
        <end position="47"/>
    </location>
    <ligand>
        <name>GTP</name>
        <dbReference type="ChEBI" id="CHEBI:37565"/>
    </ligand>
</feature>
<feature type="binding site" evidence="1">
    <location>
        <position position="45"/>
    </location>
    <ligand>
        <name>Mg(2+)</name>
        <dbReference type="ChEBI" id="CHEBI:18420"/>
    </ligand>
</feature>
<feature type="binding site" description="in other chain" evidence="1">
    <location>
        <position position="137"/>
    </location>
    <ligand>
        <name>IMP</name>
        <dbReference type="ChEBI" id="CHEBI:58053"/>
        <note>ligand shared between dimeric partners</note>
    </ligand>
</feature>
<feature type="binding site" evidence="1">
    <location>
        <position position="151"/>
    </location>
    <ligand>
        <name>IMP</name>
        <dbReference type="ChEBI" id="CHEBI:58053"/>
        <note>ligand shared between dimeric partners</note>
    </ligand>
</feature>
<feature type="binding site" description="in other chain" evidence="1">
    <location>
        <position position="247"/>
    </location>
    <ligand>
        <name>IMP</name>
        <dbReference type="ChEBI" id="CHEBI:58053"/>
        <note>ligand shared between dimeric partners</note>
    </ligand>
</feature>
<feature type="binding site" description="in other chain" evidence="1">
    <location>
        <position position="262"/>
    </location>
    <ligand>
        <name>IMP</name>
        <dbReference type="ChEBI" id="CHEBI:58053"/>
        <note>ligand shared between dimeric partners</note>
    </ligand>
</feature>
<feature type="binding site" evidence="1">
    <location>
        <begin position="326"/>
        <end position="332"/>
    </location>
    <ligand>
        <name>substrate</name>
    </ligand>
</feature>
<feature type="binding site" description="in other chain" evidence="1">
    <location>
        <position position="330"/>
    </location>
    <ligand>
        <name>IMP</name>
        <dbReference type="ChEBI" id="CHEBI:58053"/>
        <note>ligand shared between dimeric partners</note>
    </ligand>
</feature>
<feature type="binding site" evidence="1">
    <location>
        <position position="332"/>
    </location>
    <ligand>
        <name>GTP</name>
        <dbReference type="ChEBI" id="CHEBI:37565"/>
    </ligand>
</feature>
<feature type="binding site" evidence="1">
    <location>
        <begin position="358"/>
        <end position="360"/>
    </location>
    <ligand>
        <name>GTP</name>
        <dbReference type="ChEBI" id="CHEBI:37565"/>
    </ligand>
</feature>
<feature type="binding site" evidence="1">
    <location>
        <begin position="440"/>
        <end position="442"/>
    </location>
    <ligand>
        <name>GTP</name>
        <dbReference type="ChEBI" id="CHEBI:37565"/>
    </ligand>
</feature>
<organism>
    <name type="scientific">Albidiferax ferrireducens (strain ATCC BAA-621 / DSM 15236 / T118)</name>
    <name type="common">Rhodoferax ferrireducens</name>
    <dbReference type="NCBI Taxonomy" id="338969"/>
    <lineage>
        <taxon>Bacteria</taxon>
        <taxon>Pseudomonadati</taxon>
        <taxon>Pseudomonadota</taxon>
        <taxon>Betaproteobacteria</taxon>
        <taxon>Burkholderiales</taxon>
        <taxon>Comamonadaceae</taxon>
        <taxon>Rhodoferax</taxon>
    </lineage>
</organism>
<protein>
    <recommendedName>
        <fullName evidence="1">Adenylosuccinate synthetase</fullName>
        <shortName evidence="1">AMPSase</shortName>
        <shortName evidence="1">AdSS</shortName>
        <ecNumber evidence="1">6.3.4.4</ecNumber>
    </recommendedName>
    <alternativeName>
        <fullName evidence="1">IMP--aspartate ligase</fullName>
    </alternativeName>
</protein>
<keyword id="KW-0963">Cytoplasm</keyword>
<keyword id="KW-0342">GTP-binding</keyword>
<keyword id="KW-0436">Ligase</keyword>
<keyword id="KW-0460">Magnesium</keyword>
<keyword id="KW-0479">Metal-binding</keyword>
<keyword id="KW-0547">Nucleotide-binding</keyword>
<keyword id="KW-0658">Purine biosynthesis</keyword>
<keyword id="KW-1185">Reference proteome</keyword>
<reference key="1">
    <citation type="submission" date="2006-02" db="EMBL/GenBank/DDBJ databases">
        <title>Complete sequence of chromosome of Rhodoferax ferrireducens DSM 15236.</title>
        <authorList>
            <person name="Copeland A."/>
            <person name="Lucas S."/>
            <person name="Lapidus A."/>
            <person name="Barry K."/>
            <person name="Detter J.C."/>
            <person name="Glavina del Rio T."/>
            <person name="Hammon N."/>
            <person name="Israni S."/>
            <person name="Pitluck S."/>
            <person name="Brettin T."/>
            <person name="Bruce D."/>
            <person name="Han C."/>
            <person name="Tapia R."/>
            <person name="Gilna P."/>
            <person name="Kiss H."/>
            <person name="Schmutz J."/>
            <person name="Larimer F."/>
            <person name="Land M."/>
            <person name="Kyrpides N."/>
            <person name="Ivanova N."/>
            <person name="Richardson P."/>
        </authorList>
    </citation>
    <scope>NUCLEOTIDE SEQUENCE [LARGE SCALE GENOMIC DNA]</scope>
    <source>
        <strain>ATCC BAA-621 / DSM 15236 / T118</strain>
    </source>
</reference>
<evidence type="ECO:0000255" key="1">
    <source>
        <dbReference type="HAMAP-Rule" id="MF_00011"/>
    </source>
</evidence>